<gene>
    <name evidence="15 19" type="primary">PARP14</name>
    <name evidence="13" type="synonym">BAL2</name>
    <name evidence="11" type="synonym">KIAA1268</name>
</gene>
<evidence type="ECO:0000250" key="1">
    <source>
        <dbReference type="UniProtKB" id="Q2EMV9"/>
    </source>
</evidence>
<evidence type="ECO:0000255" key="2">
    <source>
        <dbReference type="PROSITE-ProRule" id="PRU00248"/>
    </source>
</evidence>
<evidence type="ECO:0000255" key="3">
    <source>
        <dbReference type="PROSITE-ProRule" id="PRU00397"/>
    </source>
</evidence>
<evidence type="ECO:0000255" key="4">
    <source>
        <dbReference type="PROSITE-ProRule" id="PRU00490"/>
    </source>
</evidence>
<evidence type="ECO:0000256" key="5">
    <source>
        <dbReference type="SAM" id="MobiDB-lite"/>
    </source>
</evidence>
<evidence type="ECO:0000269" key="6">
    <source>
    </source>
</evidence>
<evidence type="ECO:0000269" key="7">
    <source>
    </source>
</evidence>
<evidence type="ECO:0000269" key="8">
    <source>
    </source>
</evidence>
<evidence type="ECO:0000269" key="9">
    <source>
    </source>
</evidence>
<evidence type="ECO:0000269" key="10">
    <source>
    </source>
</evidence>
<evidence type="ECO:0000303" key="11">
    <source>
    </source>
</evidence>
<evidence type="ECO:0000303" key="12">
    <source>
    </source>
</evidence>
<evidence type="ECO:0000303" key="13">
    <source>
    </source>
</evidence>
<evidence type="ECO:0000303" key="14">
    <source>
    </source>
</evidence>
<evidence type="ECO:0000303" key="15">
    <source>
    </source>
</evidence>
<evidence type="ECO:0000303" key="16">
    <source ref="1"/>
</evidence>
<evidence type="ECO:0000305" key="17"/>
<evidence type="ECO:0000305" key="18">
    <source>
    </source>
</evidence>
<evidence type="ECO:0000312" key="19">
    <source>
        <dbReference type="HGNC" id="HGNC:29232"/>
    </source>
</evidence>
<evidence type="ECO:0007744" key="20">
    <source>
        <dbReference type="PDB" id="3Q6Z"/>
    </source>
</evidence>
<evidence type="ECO:0007744" key="21">
    <source>
        <dbReference type="PDB" id="3Q71"/>
    </source>
</evidence>
<evidence type="ECO:0007744" key="22">
    <source>
        <dbReference type="PDB" id="3VFQ"/>
    </source>
</evidence>
<evidence type="ECO:0007744" key="23">
    <source>
        <dbReference type="PDB" id="4ABK"/>
    </source>
</evidence>
<evidence type="ECO:0007744" key="24">
    <source>
        <dbReference type="PDB" id="4ABL"/>
    </source>
</evidence>
<evidence type="ECO:0007744" key="25">
    <source>
        <dbReference type="PDB" id="4D86"/>
    </source>
</evidence>
<evidence type="ECO:0007744" key="26">
    <source>
    </source>
</evidence>
<evidence type="ECO:0007744" key="27">
    <source>
    </source>
</evidence>
<evidence type="ECO:0007829" key="28">
    <source>
        <dbReference type="PDB" id="3SMJ"/>
    </source>
</evidence>
<evidence type="ECO:0007829" key="29">
    <source>
        <dbReference type="PDB" id="3VFQ"/>
    </source>
</evidence>
<evidence type="ECO:0007829" key="30">
    <source>
        <dbReference type="PDB" id="4D86"/>
    </source>
</evidence>
<evidence type="ECO:0007829" key="31">
    <source>
        <dbReference type="PDB" id="5LYH"/>
    </source>
</evidence>
<evidence type="ECO:0007829" key="32">
    <source>
        <dbReference type="PDB" id="5O2D"/>
    </source>
</evidence>
<evidence type="ECO:0007829" key="33">
    <source>
        <dbReference type="PDB" id="5QHT"/>
    </source>
</evidence>
<evidence type="ECO:0007829" key="34">
    <source>
        <dbReference type="PDB" id="6FZM"/>
    </source>
</evidence>
<evidence type="ECO:0007829" key="35">
    <source>
        <dbReference type="PDB" id="6WE3"/>
    </source>
</evidence>
<evidence type="ECO:0007829" key="36">
    <source>
        <dbReference type="PDB" id="6WE4"/>
    </source>
</evidence>
<evidence type="ECO:0007829" key="37">
    <source>
        <dbReference type="PDB" id="7L9Y"/>
    </source>
</evidence>
<feature type="chain" id="PRO_0000247589" description="Protein mono-ADP-ribosyltransferase PARP14">
    <location>
        <begin position="1"/>
        <end position="1801"/>
    </location>
</feature>
<feature type="domain" description="Macro 1" evidence="4">
    <location>
        <begin position="791"/>
        <end position="978"/>
    </location>
</feature>
<feature type="domain" description="Macro 2" evidence="4">
    <location>
        <begin position="1003"/>
        <end position="1190"/>
    </location>
</feature>
<feature type="domain" description="Macro 3" evidence="4">
    <location>
        <begin position="1216"/>
        <end position="1387"/>
    </location>
</feature>
<feature type="domain" description="WWE" evidence="2">
    <location>
        <begin position="1523"/>
        <end position="1601"/>
    </location>
</feature>
<feature type="domain" description="PARP catalytic" evidence="3">
    <location>
        <begin position="1605"/>
        <end position="1801"/>
    </location>
</feature>
<feature type="region of interest" description="Disordered" evidence="5">
    <location>
        <begin position="109"/>
        <end position="132"/>
    </location>
</feature>
<feature type="binding site" evidence="8 20">
    <location>
        <position position="824"/>
    </location>
    <ligand>
        <name>a glycoprotein</name>
        <dbReference type="ChEBI" id="CHEBI:17089"/>
        <label>1</label>
    </ligand>
    <ligandPart>
        <name>5-O-(ADP-D-ribosyl)-L-glutamate residue</name>
        <dbReference type="ChEBI" id="CHEBI:142540"/>
    </ligandPart>
</feature>
<feature type="binding site" evidence="8 20">
    <location>
        <position position="833"/>
    </location>
    <ligand>
        <name>a glycoprotein</name>
        <dbReference type="ChEBI" id="CHEBI:17089"/>
        <label>1</label>
    </ligand>
    <ligandPart>
        <name>5-O-(ADP-D-ribosyl)-L-glutamate residue</name>
        <dbReference type="ChEBI" id="CHEBI:142540"/>
    </ligandPart>
</feature>
<feature type="binding site" evidence="8 20">
    <location>
        <begin position="922"/>
        <end position="926"/>
    </location>
    <ligand>
        <name>a glycoprotein</name>
        <dbReference type="ChEBI" id="CHEBI:17089"/>
        <label>1</label>
    </ligand>
    <ligandPart>
        <name>5-O-(ADP-D-ribosyl)-L-glutamate residue</name>
        <dbReference type="ChEBI" id="CHEBI:142540"/>
    </ligandPart>
</feature>
<feature type="binding site" evidence="8 20">
    <location>
        <position position="961"/>
    </location>
    <ligand>
        <name>a glycoprotein</name>
        <dbReference type="ChEBI" id="CHEBI:17089"/>
        <label>1</label>
    </ligand>
    <ligandPart>
        <name>5-O-(ADP-D-ribosyl)-L-glutamate residue</name>
        <dbReference type="ChEBI" id="CHEBI:142540"/>
    </ligandPart>
</feature>
<feature type="binding site" evidence="8 21 22">
    <location>
        <begin position="1023"/>
        <end position="1024"/>
    </location>
    <ligand>
        <name>a glycoprotein</name>
        <dbReference type="ChEBI" id="CHEBI:17089"/>
        <label>2</label>
    </ligand>
    <ligandPart>
        <name>5-O-(ADP-D-ribosyl)-L-glutamate residue</name>
        <dbReference type="ChEBI" id="CHEBI:142540"/>
    </ligandPart>
</feature>
<feature type="binding site" evidence="8 23">
    <location>
        <position position="1034"/>
    </location>
    <ligand>
        <name>a glycoprotein</name>
        <dbReference type="ChEBI" id="CHEBI:17089"/>
        <label>2</label>
    </ligand>
    <ligandPart>
        <name>5-O-(ADP-D-ribosyl)-L-glutamate residue</name>
        <dbReference type="ChEBI" id="CHEBI:142540"/>
    </ligandPart>
</feature>
<feature type="binding site" evidence="8 21 22">
    <location>
        <begin position="1046"/>
        <end position="1049"/>
    </location>
    <ligand>
        <name>a glycoprotein</name>
        <dbReference type="ChEBI" id="CHEBI:17089"/>
        <label>2</label>
    </ligand>
    <ligandPart>
        <name>5-O-(ADP-D-ribosyl)-L-glutamate residue</name>
        <dbReference type="ChEBI" id="CHEBI:142540"/>
    </ligandPart>
</feature>
<feature type="binding site" evidence="8 21 22">
    <location>
        <begin position="1133"/>
        <end position="1137"/>
    </location>
    <ligand>
        <name>a glycoprotein</name>
        <dbReference type="ChEBI" id="CHEBI:17089"/>
        <label>2</label>
    </ligand>
    <ligandPart>
        <name>5-O-(ADP-D-ribosyl)-L-glutamate residue</name>
        <dbReference type="ChEBI" id="CHEBI:142540"/>
    </ligandPart>
</feature>
<feature type="binding site" evidence="8 21 22">
    <location>
        <begin position="1175"/>
        <end position="1178"/>
    </location>
    <ligand>
        <name>a glycoprotein</name>
        <dbReference type="ChEBI" id="CHEBI:17089"/>
        <label>2</label>
    </ligand>
    <ligandPart>
        <name>5-O-(ADP-D-ribosyl)-L-glutamate residue</name>
        <dbReference type="ChEBI" id="CHEBI:142540"/>
    </ligandPart>
</feature>
<feature type="binding site" evidence="8 23">
    <location>
        <begin position="1235"/>
        <end position="1236"/>
    </location>
    <ligand>
        <name>a glycoprotein</name>
        <dbReference type="ChEBI" id="CHEBI:17089"/>
        <label>3</label>
    </ligand>
    <ligandPart>
        <name>5-O-(ADP-D-ribosyl)-L-glutamate residue</name>
        <dbReference type="ChEBI" id="CHEBI:142540"/>
    </ligandPart>
</feature>
<feature type="binding site" evidence="8 23">
    <location>
        <position position="1247"/>
    </location>
    <ligand>
        <name>a glycoprotein</name>
        <dbReference type="ChEBI" id="CHEBI:17089"/>
        <label>3</label>
    </ligand>
    <ligandPart>
        <name>5-O-(ADP-D-ribosyl)-L-glutamate residue</name>
        <dbReference type="ChEBI" id="CHEBI:142540"/>
    </ligandPart>
</feature>
<feature type="binding site" evidence="8 23">
    <location>
        <position position="1258"/>
    </location>
    <ligand>
        <name>a glycoprotein</name>
        <dbReference type="ChEBI" id="CHEBI:17089"/>
        <label>3</label>
    </ligand>
    <ligandPart>
        <name>5-O-(ADP-D-ribosyl)-L-glutamate residue</name>
        <dbReference type="ChEBI" id="CHEBI:142540"/>
    </ligandPart>
</feature>
<feature type="binding site" evidence="8 21 22">
    <location>
        <begin position="1332"/>
        <end position="1336"/>
    </location>
    <ligand>
        <name>a glycoprotein</name>
        <dbReference type="ChEBI" id="CHEBI:17089"/>
        <label>3</label>
    </ligand>
    <ligandPart>
        <name>5-O-(ADP-D-ribosyl)-L-glutamate residue</name>
        <dbReference type="ChEBI" id="CHEBI:142540"/>
    </ligandPart>
</feature>
<feature type="binding site" evidence="8 23">
    <location>
        <position position="1371"/>
    </location>
    <ligand>
        <name>a glycoprotein</name>
        <dbReference type="ChEBI" id="CHEBI:17089"/>
        <label>3</label>
    </ligand>
    <ligandPart>
        <name>5-O-(ADP-D-ribosyl)-L-glutamate residue</name>
        <dbReference type="ChEBI" id="CHEBI:142540"/>
    </ligandPart>
</feature>
<feature type="modified residue" description="Phosphoserine" evidence="26">
    <location>
        <position position="33"/>
    </location>
</feature>
<feature type="modified residue" description="Phosphoserine" evidence="27">
    <location>
        <position position="1403"/>
    </location>
</feature>
<feature type="modified residue" description="Phosphoserine" evidence="26">
    <location>
        <position position="1411"/>
    </location>
</feature>
<feature type="splice variant" id="VSP_020013" description="In isoform 5." evidence="12">
    <location>
        <begin position="1"/>
        <end position="1004"/>
    </location>
</feature>
<feature type="splice variant" id="VSP_020014" description="In isoform 3." evidence="16">
    <location>
        <begin position="1"/>
        <end position="283"/>
    </location>
</feature>
<feature type="splice variant" id="VSP_040876" description="In isoform 1." evidence="12 13 14">
    <location>
        <begin position="119"/>
        <end position="199"/>
    </location>
</feature>
<feature type="splice variant" id="VSP_020017" description="In isoform 5." evidence="12">
    <original>KGSLVSPGG</original>
    <variation>MYLRRLLRP</variation>
    <location>
        <begin position="1005"/>
        <end position="1013"/>
    </location>
</feature>
<feature type="splice variant" id="VSP_020018" description="In isoform 4." evidence="11 13">
    <original>IERIQNPDLWNSYQAKKKTMDAKNGQTMNEKQL</original>
    <variation>VSLLLECSFWMVEISSVMVLYKIHFHSLPITFF</variation>
    <location>
        <begin position="1648"/>
        <end position="1680"/>
    </location>
</feature>
<feature type="splice variant" id="VSP_020019" description="In isoform 4." evidence="11 13">
    <location>
        <begin position="1681"/>
        <end position="1801"/>
    </location>
</feature>
<feature type="mutagenesis site" description="Abolishes interaction with PARP10." evidence="8">
    <original>G</original>
    <variation>E</variation>
    <location>
        <position position="1055"/>
    </location>
</feature>
<feature type="sequence conflict" description="In Ref. 4; DB237115." evidence="17" ref="4">
    <original>Y</original>
    <variation>C</variation>
    <location>
        <position position="59"/>
    </location>
</feature>
<feature type="sequence conflict" description="In Ref. 3; BAG65132." evidence="17" ref="3">
    <original>N</original>
    <variation>D</variation>
    <location>
        <position position="597"/>
    </location>
</feature>
<feature type="sequence conflict" description="In Ref. 3; BAA91897." evidence="17" ref="3">
    <original>E</original>
    <variation>G</variation>
    <location>
        <position position="1239"/>
    </location>
</feature>
<feature type="sequence conflict" description="In Ref. 1; AAN08627." evidence="17" ref="1">
    <original>G</original>
    <variation>A</variation>
    <location>
        <position position="1499"/>
    </location>
</feature>
<feature type="sequence conflict" description="In Ref. 1; AAN08627." evidence="17" ref="1">
    <original>A</original>
    <variation>G</variation>
    <location>
        <position position="1521"/>
    </location>
</feature>
<feature type="strand" evidence="30">
    <location>
        <begin position="792"/>
        <end position="799"/>
    </location>
</feature>
<feature type="strand" evidence="30">
    <location>
        <begin position="802"/>
        <end position="808"/>
    </location>
</feature>
<feature type="strand" evidence="30">
    <location>
        <begin position="815"/>
        <end position="823"/>
    </location>
</feature>
<feature type="helix" evidence="30">
    <location>
        <begin position="832"/>
        <end position="841"/>
    </location>
</feature>
<feature type="helix" evidence="30">
    <location>
        <begin position="844"/>
        <end position="856"/>
    </location>
</feature>
<feature type="strand" evidence="30">
    <location>
        <begin position="861"/>
        <end position="868"/>
    </location>
</feature>
<feature type="strand" evidence="30">
    <location>
        <begin position="872"/>
        <end position="881"/>
    </location>
</feature>
<feature type="helix" evidence="30">
    <location>
        <begin position="887"/>
        <end position="889"/>
    </location>
</feature>
<feature type="helix" evidence="30">
    <location>
        <begin position="890"/>
        <end position="910"/>
    </location>
</feature>
<feature type="strand" evidence="30">
    <location>
        <begin position="914"/>
        <end position="918"/>
    </location>
</feature>
<feature type="turn" evidence="29">
    <location>
        <begin position="921"/>
        <end position="926"/>
    </location>
</feature>
<feature type="helix" evidence="30">
    <location>
        <begin position="930"/>
        <end position="947"/>
    </location>
</feature>
<feature type="strand" evidence="30">
    <location>
        <begin position="956"/>
        <end position="963"/>
    </location>
</feature>
<feature type="helix" evidence="30">
    <location>
        <begin position="964"/>
        <end position="977"/>
    </location>
</feature>
<feature type="strand" evidence="32">
    <location>
        <begin position="1006"/>
        <end position="1009"/>
    </location>
</feature>
<feature type="strand" evidence="32">
    <location>
        <begin position="1015"/>
        <end position="1019"/>
    </location>
</feature>
<feature type="helix" evidence="30">
    <location>
        <begin position="1023"/>
        <end position="1025"/>
    </location>
</feature>
<feature type="strand" evidence="32">
    <location>
        <begin position="1028"/>
        <end position="1034"/>
    </location>
</feature>
<feature type="strand" evidence="30">
    <location>
        <begin position="1041"/>
        <end position="1044"/>
    </location>
</feature>
<feature type="helix" evidence="32">
    <location>
        <begin position="1045"/>
        <end position="1054"/>
    </location>
</feature>
<feature type="helix" evidence="32">
    <location>
        <begin position="1057"/>
        <end position="1066"/>
    </location>
</feature>
<feature type="strand" evidence="32">
    <location>
        <begin position="1076"/>
        <end position="1080"/>
    </location>
</feature>
<feature type="strand" evidence="32">
    <location>
        <begin position="1084"/>
        <end position="1092"/>
    </location>
</feature>
<feature type="helix" evidence="32">
    <location>
        <begin position="1097"/>
        <end position="1099"/>
    </location>
</feature>
<feature type="helix" evidence="32">
    <location>
        <begin position="1101"/>
        <end position="1121"/>
    </location>
</feature>
<feature type="strand" evidence="32">
    <location>
        <begin position="1126"/>
        <end position="1130"/>
    </location>
</feature>
<feature type="helix" evidence="32">
    <location>
        <begin position="1141"/>
        <end position="1158"/>
    </location>
</feature>
<feature type="strand" evidence="32">
    <location>
        <begin position="1166"/>
        <end position="1170"/>
    </location>
</feature>
<feature type="helix" evidence="32">
    <location>
        <begin position="1176"/>
        <end position="1189"/>
    </location>
</feature>
<feature type="strand" evidence="33">
    <location>
        <begin position="1213"/>
        <end position="1216"/>
    </location>
</feature>
<feature type="strand" evidence="33">
    <location>
        <begin position="1219"/>
        <end position="1224"/>
    </location>
</feature>
<feature type="strand" evidence="33">
    <location>
        <begin position="1227"/>
        <end position="1234"/>
    </location>
</feature>
<feature type="helix" evidence="33">
    <location>
        <begin position="1236"/>
        <end position="1238"/>
    </location>
</feature>
<feature type="strand" evidence="33">
    <location>
        <begin position="1242"/>
        <end position="1248"/>
    </location>
</feature>
<feature type="helix" evidence="33">
    <location>
        <begin position="1258"/>
        <end position="1266"/>
    </location>
</feature>
<feature type="helix" evidence="33">
    <location>
        <begin position="1268"/>
        <end position="1280"/>
    </location>
</feature>
<feature type="strand" evidence="33">
    <location>
        <begin position="1284"/>
        <end position="1289"/>
    </location>
</feature>
<feature type="strand" evidence="33">
    <location>
        <begin position="1293"/>
        <end position="1302"/>
    </location>
</feature>
<feature type="helix" evidence="33">
    <location>
        <begin position="1307"/>
        <end position="1320"/>
    </location>
</feature>
<feature type="strand" evidence="33">
    <location>
        <begin position="1325"/>
        <end position="1328"/>
    </location>
</feature>
<feature type="helix" evidence="33">
    <location>
        <begin position="1340"/>
        <end position="1356"/>
    </location>
</feature>
<feature type="strand" evidence="33">
    <location>
        <begin position="1365"/>
        <end position="1372"/>
    </location>
</feature>
<feature type="helix" evidence="33">
    <location>
        <begin position="1373"/>
        <end position="1386"/>
    </location>
</feature>
<feature type="strand" evidence="28">
    <location>
        <begin position="1617"/>
        <end position="1621"/>
    </location>
</feature>
<feature type="helix" evidence="28">
    <location>
        <begin position="1629"/>
        <end position="1640"/>
    </location>
</feature>
<feature type="strand" evidence="28">
    <location>
        <begin position="1643"/>
        <end position="1652"/>
    </location>
</feature>
<feature type="helix" evidence="28">
    <location>
        <begin position="1654"/>
        <end position="1670"/>
    </location>
</feature>
<feature type="turn" evidence="36">
    <location>
        <begin position="1671"/>
        <end position="1673"/>
    </location>
</feature>
<feature type="strand" evidence="28">
    <location>
        <begin position="1677"/>
        <end position="1684"/>
    </location>
</feature>
<feature type="helix" evidence="28">
    <location>
        <begin position="1686"/>
        <end position="1688"/>
    </location>
</feature>
<feature type="helix" evidence="28">
    <location>
        <begin position="1689"/>
        <end position="1695"/>
    </location>
</feature>
<feature type="helix" evidence="35">
    <location>
        <begin position="1699"/>
        <end position="1702"/>
    </location>
</feature>
<feature type="helix" evidence="28">
    <location>
        <begin position="1704"/>
        <end position="1706"/>
    </location>
</feature>
<feature type="strand" evidence="28">
    <location>
        <begin position="1707"/>
        <end position="1709"/>
    </location>
</feature>
<feature type="strand" evidence="28">
    <location>
        <begin position="1713"/>
        <end position="1718"/>
    </location>
</feature>
<feature type="helix" evidence="28">
    <location>
        <begin position="1719"/>
        <end position="1722"/>
    </location>
</feature>
<feature type="turn" evidence="28">
    <location>
        <begin position="1725"/>
        <end position="1727"/>
    </location>
</feature>
<feature type="strand" evidence="28">
    <location>
        <begin position="1736"/>
        <end position="1744"/>
    </location>
</feature>
<feature type="strand" evidence="28">
    <location>
        <begin position="1747"/>
        <end position="1750"/>
    </location>
</feature>
<feature type="strand" evidence="36">
    <location>
        <begin position="1760"/>
        <end position="1762"/>
    </location>
</feature>
<feature type="strand" evidence="31">
    <location>
        <begin position="1763"/>
        <end position="1765"/>
    </location>
</feature>
<feature type="strand" evidence="34">
    <location>
        <begin position="1767"/>
        <end position="1769"/>
    </location>
</feature>
<feature type="strand" evidence="28">
    <location>
        <begin position="1771"/>
        <end position="1775"/>
    </location>
</feature>
<feature type="strand" evidence="28">
    <location>
        <begin position="1777"/>
        <end position="1779"/>
    </location>
</feature>
<feature type="strand" evidence="28">
    <location>
        <begin position="1781"/>
        <end position="1785"/>
    </location>
</feature>
<feature type="helix" evidence="37">
    <location>
        <begin position="1788"/>
        <end position="1790"/>
    </location>
</feature>
<feature type="strand" evidence="28">
    <location>
        <begin position="1791"/>
        <end position="1800"/>
    </location>
</feature>
<reference key="1">
    <citation type="submission" date="2002-07" db="EMBL/GenBank/DDBJ databases">
        <authorList>
            <person name="Guo J.H."/>
            <person name="Yu L."/>
        </authorList>
    </citation>
    <scope>NUCLEOTIDE SEQUENCE [LARGE SCALE MRNA] (ISOFORM 3)</scope>
    <source>
        <tissue>Ovary</tissue>
    </source>
</reference>
<reference key="2">
    <citation type="journal article" date="2006" name="Nature">
        <title>The DNA sequence, annotation and analysis of human chromosome 3.</title>
        <authorList>
            <person name="Muzny D.M."/>
            <person name="Scherer S.E."/>
            <person name="Kaul R."/>
            <person name="Wang J."/>
            <person name="Yu J."/>
            <person name="Sudbrak R."/>
            <person name="Buhay C.J."/>
            <person name="Chen R."/>
            <person name="Cree A."/>
            <person name="Ding Y."/>
            <person name="Dugan-Rocha S."/>
            <person name="Gill R."/>
            <person name="Gunaratne P."/>
            <person name="Harris R.A."/>
            <person name="Hawes A.C."/>
            <person name="Hernandez J."/>
            <person name="Hodgson A.V."/>
            <person name="Hume J."/>
            <person name="Jackson A."/>
            <person name="Khan Z.M."/>
            <person name="Kovar-Smith C."/>
            <person name="Lewis L.R."/>
            <person name="Lozado R.J."/>
            <person name="Metzker M.L."/>
            <person name="Milosavljevic A."/>
            <person name="Miner G.R."/>
            <person name="Morgan M.B."/>
            <person name="Nazareth L.V."/>
            <person name="Scott G."/>
            <person name="Sodergren E."/>
            <person name="Song X.-Z."/>
            <person name="Steffen D."/>
            <person name="Wei S."/>
            <person name="Wheeler D.A."/>
            <person name="Wright M.W."/>
            <person name="Worley K.C."/>
            <person name="Yuan Y."/>
            <person name="Zhang Z."/>
            <person name="Adams C.Q."/>
            <person name="Ansari-Lari M.A."/>
            <person name="Ayele M."/>
            <person name="Brown M.J."/>
            <person name="Chen G."/>
            <person name="Chen Z."/>
            <person name="Clendenning J."/>
            <person name="Clerc-Blankenburg K.P."/>
            <person name="Chen R."/>
            <person name="Chen Z."/>
            <person name="Davis C."/>
            <person name="Delgado O."/>
            <person name="Dinh H.H."/>
            <person name="Dong W."/>
            <person name="Draper H."/>
            <person name="Ernst S."/>
            <person name="Fu G."/>
            <person name="Gonzalez-Garay M.L."/>
            <person name="Garcia D.K."/>
            <person name="Gillett W."/>
            <person name="Gu J."/>
            <person name="Hao B."/>
            <person name="Haugen E."/>
            <person name="Havlak P."/>
            <person name="He X."/>
            <person name="Hennig S."/>
            <person name="Hu S."/>
            <person name="Huang W."/>
            <person name="Jackson L.R."/>
            <person name="Jacob L.S."/>
            <person name="Kelly S.H."/>
            <person name="Kube M."/>
            <person name="Levy R."/>
            <person name="Li Z."/>
            <person name="Liu B."/>
            <person name="Liu J."/>
            <person name="Liu W."/>
            <person name="Lu J."/>
            <person name="Maheshwari M."/>
            <person name="Nguyen B.-V."/>
            <person name="Okwuonu G.O."/>
            <person name="Palmeiri A."/>
            <person name="Pasternak S."/>
            <person name="Perez L.M."/>
            <person name="Phelps K.A."/>
            <person name="Plopper F.J."/>
            <person name="Qiang B."/>
            <person name="Raymond C."/>
            <person name="Rodriguez R."/>
            <person name="Saenphimmachak C."/>
            <person name="Santibanez J."/>
            <person name="Shen H."/>
            <person name="Shen Y."/>
            <person name="Subramanian S."/>
            <person name="Tabor P.E."/>
            <person name="Verduzco D."/>
            <person name="Waldron L."/>
            <person name="Wang J."/>
            <person name="Wang J."/>
            <person name="Wang Q."/>
            <person name="Williams G.A."/>
            <person name="Wong G.K.-S."/>
            <person name="Yao Z."/>
            <person name="Zhang J."/>
            <person name="Zhang X."/>
            <person name="Zhao G."/>
            <person name="Zhou J."/>
            <person name="Zhou Y."/>
            <person name="Nelson D."/>
            <person name="Lehrach H."/>
            <person name="Reinhardt R."/>
            <person name="Naylor S.L."/>
            <person name="Yang H."/>
            <person name="Olson M."/>
            <person name="Weinstock G."/>
            <person name="Gibbs R.A."/>
        </authorList>
    </citation>
    <scope>NUCLEOTIDE SEQUENCE [LARGE SCALE GENOMIC DNA]</scope>
</reference>
<reference key="3">
    <citation type="journal article" date="2004" name="Nat. Genet.">
        <title>Complete sequencing and characterization of 21,243 full-length human cDNAs.</title>
        <authorList>
            <person name="Ota T."/>
            <person name="Suzuki Y."/>
            <person name="Nishikawa T."/>
            <person name="Otsuki T."/>
            <person name="Sugiyama T."/>
            <person name="Irie R."/>
            <person name="Wakamatsu A."/>
            <person name="Hayashi K."/>
            <person name="Sato H."/>
            <person name="Nagai K."/>
            <person name="Kimura K."/>
            <person name="Makita H."/>
            <person name="Sekine M."/>
            <person name="Obayashi M."/>
            <person name="Nishi T."/>
            <person name="Shibahara T."/>
            <person name="Tanaka T."/>
            <person name="Ishii S."/>
            <person name="Yamamoto J."/>
            <person name="Saito K."/>
            <person name="Kawai Y."/>
            <person name="Isono Y."/>
            <person name="Nakamura Y."/>
            <person name="Nagahari K."/>
            <person name="Murakami K."/>
            <person name="Yasuda T."/>
            <person name="Iwayanagi T."/>
            <person name="Wagatsuma M."/>
            <person name="Shiratori A."/>
            <person name="Sudo H."/>
            <person name="Hosoiri T."/>
            <person name="Kaku Y."/>
            <person name="Kodaira H."/>
            <person name="Kondo H."/>
            <person name="Sugawara M."/>
            <person name="Takahashi M."/>
            <person name="Kanda K."/>
            <person name="Yokoi T."/>
            <person name="Furuya T."/>
            <person name="Kikkawa E."/>
            <person name="Omura Y."/>
            <person name="Abe K."/>
            <person name="Kamihara K."/>
            <person name="Katsuta N."/>
            <person name="Sato K."/>
            <person name="Tanikawa M."/>
            <person name="Yamazaki M."/>
            <person name="Ninomiya K."/>
            <person name="Ishibashi T."/>
            <person name="Yamashita H."/>
            <person name="Murakawa K."/>
            <person name="Fujimori K."/>
            <person name="Tanai H."/>
            <person name="Kimata M."/>
            <person name="Watanabe M."/>
            <person name="Hiraoka S."/>
            <person name="Chiba Y."/>
            <person name="Ishida S."/>
            <person name="Ono Y."/>
            <person name="Takiguchi S."/>
            <person name="Watanabe S."/>
            <person name="Yosida M."/>
            <person name="Hotuta T."/>
            <person name="Kusano J."/>
            <person name="Kanehori K."/>
            <person name="Takahashi-Fujii A."/>
            <person name="Hara H."/>
            <person name="Tanase T.-O."/>
            <person name="Nomura Y."/>
            <person name="Togiya S."/>
            <person name="Komai F."/>
            <person name="Hara R."/>
            <person name="Takeuchi K."/>
            <person name="Arita M."/>
            <person name="Imose N."/>
            <person name="Musashino K."/>
            <person name="Yuuki H."/>
            <person name="Oshima A."/>
            <person name="Sasaki N."/>
            <person name="Aotsuka S."/>
            <person name="Yoshikawa Y."/>
            <person name="Matsunawa H."/>
            <person name="Ichihara T."/>
            <person name="Shiohata N."/>
            <person name="Sano S."/>
            <person name="Moriya S."/>
            <person name="Momiyama H."/>
            <person name="Satoh N."/>
            <person name="Takami S."/>
            <person name="Terashima Y."/>
            <person name="Suzuki O."/>
            <person name="Nakagawa S."/>
            <person name="Senoh A."/>
            <person name="Mizoguchi H."/>
            <person name="Goto Y."/>
            <person name="Shimizu F."/>
            <person name="Wakebe H."/>
            <person name="Hishigaki H."/>
            <person name="Watanabe T."/>
            <person name="Sugiyama A."/>
            <person name="Takemoto M."/>
            <person name="Kawakami B."/>
            <person name="Yamazaki M."/>
            <person name="Watanabe K."/>
            <person name="Kumagai A."/>
            <person name="Itakura S."/>
            <person name="Fukuzumi Y."/>
            <person name="Fujimori Y."/>
            <person name="Komiyama M."/>
            <person name="Tashiro H."/>
            <person name="Tanigami A."/>
            <person name="Fujiwara T."/>
            <person name="Ono T."/>
            <person name="Yamada K."/>
            <person name="Fujii Y."/>
            <person name="Ozaki K."/>
            <person name="Hirao M."/>
            <person name="Ohmori Y."/>
            <person name="Kawabata A."/>
            <person name="Hikiji T."/>
            <person name="Kobatake N."/>
            <person name="Inagaki H."/>
            <person name="Ikema Y."/>
            <person name="Okamoto S."/>
            <person name="Okitani R."/>
            <person name="Kawakami T."/>
            <person name="Noguchi S."/>
            <person name="Itoh T."/>
            <person name="Shigeta K."/>
            <person name="Senba T."/>
            <person name="Matsumura K."/>
            <person name="Nakajima Y."/>
            <person name="Mizuno T."/>
            <person name="Morinaga M."/>
            <person name="Sasaki M."/>
            <person name="Togashi T."/>
            <person name="Oyama M."/>
            <person name="Hata H."/>
            <person name="Watanabe M."/>
            <person name="Komatsu T."/>
            <person name="Mizushima-Sugano J."/>
            <person name="Satoh T."/>
            <person name="Shirai Y."/>
            <person name="Takahashi Y."/>
            <person name="Nakagawa K."/>
            <person name="Okumura K."/>
            <person name="Nagase T."/>
            <person name="Nomura N."/>
            <person name="Kikuchi H."/>
            <person name="Masuho Y."/>
            <person name="Yamashita R."/>
            <person name="Nakai K."/>
            <person name="Yada T."/>
            <person name="Nakamura Y."/>
            <person name="Ohara O."/>
            <person name="Isogai T."/>
            <person name="Sugano S."/>
        </authorList>
    </citation>
    <scope>NUCLEOTIDE SEQUENCE [LARGE SCALE MRNA] OF 1-1560 (ISOFORMS 1 AND 5)</scope>
    <scope>NUCLEOTIDE SEQUENCE [LARGE SCALE MRNA] OF 1380-1801 (ISOFORMS 1/3/6)</scope>
    <source>
        <tissue>Ovarian carcinoma</tissue>
        <tissue>Teratocarcinoma</tissue>
        <tissue>Trachea</tissue>
    </source>
</reference>
<reference key="4">
    <citation type="journal article" date="2006" name="Genome Res.">
        <title>Diversification of transcriptional modulation: large-scale identification and characterization of putative alternative promoters of human genes.</title>
        <authorList>
            <person name="Kimura K."/>
            <person name="Wakamatsu A."/>
            <person name="Suzuki Y."/>
            <person name="Ota T."/>
            <person name="Nishikawa T."/>
            <person name="Yamashita R."/>
            <person name="Yamamoto J."/>
            <person name="Sekine M."/>
            <person name="Tsuritani K."/>
            <person name="Wakaguri H."/>
            <person name="Ishii S."/>
            <person name="Sugiyama T."/>
            <person name="Saito K."/>
            <person name="Isono Y."/>
            <person name="Irie R."/>
            <person name="Kushida N."/>
            <person name="Yoneyama T."/>
            <person name="Otsuka R."/>
            <person name="Kanda K."/>
            <person name="Yokoi T."/>
            <person name="Kondo H."/>
            <person name="Wagatsuma M."/>
            <person name="Murakawa K."/>
            <person name="Ishida S."/>
            <person name="Ishibashi T."/>
            <person name="Takahashi-Fujii A."/>
            <person name="Tanase T."/>
            <person name="Nagai K."/>
            <person name="Kikuchi H."/>
            <person name="Nakai K."/>
            <person name="Isogai T."/>
            <person name="Sugano S."/>
        </authorList>
    </citation>
    <scope>NUCLEOTIDE SEQUENCE [LARGE SCALE MRNA] OF 1-266 (ISOFORM 1)</scope>
    <source>
        <tissue>Trachea</tissue>
    </source>
</reference>
<reference key="5">
    <citation type="journal article" date="2005" name="J. Biol. Chem.">
        <title>B-aggressive lymphoma family proteins have unique domains that modulate transcription and exhibit poly(ADP-ribose) polymerase activity.</title>
        <authorList>
            <person name="Aguiar R.C.T."/>
            <person name="Takeyama K."/>
            <person name="He C."/>
            <person name="Kreinbrink K."/>
            <person name="Shipp M.A."/>
        </authorList>
    </citation>
    <scope>NUCLEOTIDE SEQUENCE [MRNA] OF 160-1801 (ISOFORM 4)</scope>
    <scope>NUCLEOTIDE SEQUENCE [MRNA] OF 160-1801 (ISOFORM 1)</scope>
    <scope>ALTERNATIVE SPLICING</scope>
    <scope>FUNCTION</scope>
    <scope>ADP-RIBOSYLATION</scope>
</reference>
<reference key="6">
    <citation type="journal article" date="1999" name="DNA Res.">
        <title>Prediction of the coding sequences of unidentified human genes. XV. The complete sequences of 100 new cDNA clones from brain which code for large proteins in vitro.</title>
        <authorList>
            <person name="Nagase T."/>
            <person name="Ishikawa K."/>
            <person name="Kikuno R."/>
            <person name="Hirosawa M."/>
            <person name="Nomura N."/>
            <person name="Ohara O."/>
        </authorList>
    </citation>
    <scope>NUCLEOTIDE SEQUENCE [LARGE SCALE MRNA] OF 658-1801 (ISOFORM 4)</scope>
    <source>
        <tissue>Brain</tissue>
    </source>
</reference>
<reference key="7">
    <citation type="journal article" date="2008" name="Mol. Cell">
        <title>Substrate-assisted catalysis by PARP10 limits its activity to mono-ADP-ribosylation.</title>
        <authorList>
            <person name="Kleine H."/>
            <person name="Poreba E."/>
            <person name="Lesniewicz K."/>
            <person name="Hassa P.O."/>
            <person name="Hottiger M.O."/>
            <person name="Litchfield D.W."/>
            <person name="Shilton B.H."/>
            <person name="Luescher B."/>
        </authorList>
    </citation>
    <scope>FUNCTION</scope>
</reference>
<reference key="8">
    <citation type="journal article" date="2010" name="Trends Biochem. Sci.">
        <title>Toward a unified nomenclature for mammalian ADP-ribosyltransferases.</title>
        <authorList>
            <person name="Hottiger M.O."/>
            <person name="Hassa P.O."/>
            <person name="Luscher B."/>
            <person name="Schuler H."/>
            <person name="Koch-Nolte F."/>
        </authorList>
    </citation>
    <scope>NOMENCLATURE</scope>
</reference>
<reference key="9">
    <citation type="journal article" date="2011" name="BMC Syst. Biol.">
        <title>Initial characterization of the human central proteome.</title>
        <authorList>
            <person name="Burkard T.R."/>
            <person name="Planyavsky M."/>
            <person name="Kaupe I."/>
            <person name="Breitwieser F.P."/>
            <person name="Buerckstuemmer T."/>
            <person name="Bennett K.L."/>
            <person name="Superti-Furga G."/>
            <person name="Colinge J."/>
        </authorList>
    </citation>
    <scope>IDENTIFICATION BY MASS SPECTROMETRY [LARGE SCALE ANALYSIS]</scope>
</reference>
<reference key="10">
    <citation type="journal article" date="2013" name="J. Proteome Res.">
        <title>Toward a comprehensive characterization of a human cancer cell phosphoproteome.</title>
        <authorList>
            <person name="Zhou H."/>
            <person name="Di Palma S."/>
            <person name="Preisinger C."/>
            <person name="Peng M."/>
            <person name="Polat A.N."/>
            <person name="Heck A.J."/>
            <person name="Mohammed S."/>
        </authorList>
    </citation>
    <scope>PHOSPHORYLATION [LARGE SCALE ANALYSIS] AT SER-33 AND SER-1411</scope>
    <scope>IDENTIFICATION BY MASS SPECTROMETRY [LARGE SCALE ANALYSIS]</scope>
    <source>
        <tissue>Cervix carcinoma</tissue>
        <tissue>Erythroleukemia</tissue>
    </source>
</reference>
<reference key="11">
    <citation type="journal article" date="2014" name="J. Proteomics">
        <title>An enzyme assisted RP-RPLC approach for in-depth analysis of human liver phosphoproteome.</title>
        <authorList>
            <person name="Bian Y."/>
            <person name="Song C."/>
            <person name="Cheng K."/>
            <person name="Dong M."/>
            <person name="Wang F."/>
            <person name="Huang J."/>
            <person name="Sun D."/>
            <person name="Wang L."/>
            <person name="Ye M."/>
            <person name="Zou H."/>
        </authorList>
    </citation>
    <scope>PHOSPHORYLATION [LARGE SCALE ANALYSIS] AT SER-1403</scope>
    <scope>IDENTIFICATION BY MASS SPECTROMETRY [LARGE SCALE ANALYSIS]</scope>
    <source>
        <tissue>Liver</tissue>
    </source>
</reference>
<reference key="12">
    <citation type="journal article" date="2014" name="Nat. Commun.">
        <title>Family-wide analysis of poly(ADP-ribose) polymerase activity.</title>
        <authorList>
            <person name="Vyas S."/>
            <person name="Matic I."/>
            <person name="Uchima L."/>
            <person name="Rood J."/>
            <person name="Zaja R."/>
            <person name="Hay R.T."/>
            <person name="Ahel I."/>
            <person name="Chang P."/>
        </authorList>
    </citation>
    <scope>FUNCTION</scope>
</reference>
<reference key="13">
    <citation type="journal article" date="2016" name="Nat. Commun.">
        <title>PARP9 and PARP14 cross-regulate macrophage activation via STAT1 ADP-ribosylation.</title>
        <authorList>
            <person name="Iwata H."/>
            <person name="Goettsch C."/>
            <person name="Sharma A."/>
            <person name="Ricchiuto P."/>
            <person name="Goh W.W."/>
            <person name="Halu A."/>
            <person name="Yamada I."/>
            <person name="Yoshida H."/>
            <person name="Hara T."/>
            <person name="Wei M."/>
            <person name="Inoue N."/>
            <person name="Fukuda D."/>
            <person name="Mojcher A."/>
            <person name="Mattson P.C."/>
            <person name="Barabasi A.L."/>
            <person name="Boothby M."/>
            <person name="Aikawa E."/>
            <person name="Singh S.A."/>
            <person name="Aikawa M."/>
        </authorList>
    </citation>
    <scope>FUNCTION</scope>
    <scope>CATALYTIC ACTIVITY</scope>
    <scope>INTERACTION WITH PARP9</scope>
    <scope>SUBCELLULAR LOCATION</scope>
    <scope>TISSUE SPECIFICITY</scope>
    <scope>INDUCTION</scope>
    <scope>ADP-RIBOSYLATION</scope>
</reference>
<reference key="14">
    <citation type="journal article" date="2018" name="Nat. Commun.">
        <title>On the role of STAT1 and STAT6 ADP-ribosylation in the regulation of macrophage activation.</title>
        <authorList>
            <person name="Begitt A."/>
            <person name="Cavey J."/>
            <person name="Droescher M."/>
            <person name="Vinkemeier U."/>
        </authorList>
    </citation>
    <scope>COMMENT ON STAT1 ADP-RIBOSYLATION</scope>
</reference>
<reference key="15">
    <citation type="journal article" date="2012" name="J. Med. Chem.">
        <title>Discovery of ligands for ADP-ribosyltransferases via docking-based virtual screening.</title>
        <authorList>
            <person name="Andersson C.D."/>
            <person name="Karlberg T."/>
            <person name="Ekblad T."/>
            <person name="Lindgren A.E."/>
            <person name="Thorsell A.G."/>
            <person name="Spjut S."/>
            <person name="Uciechowska U."/>
            <person name="Niemiec M.S."/>
            <person name="Wittung-Stafshede P."/>
            <person name="Weigelt J."/>
            <person name="Elofsson M."/>
            <person name="Schuler H."/>
            <person name="Linusson A."/>
        </authorList>
    </citation>
    <scope>X-RAY CRYSTALLOGRAPHY (1.90 ANGSTROMS) OF 1611-1801</scope>
</reference>
<reference key="16">
    <citation type="journal article" date="2012" name="Nat. Biotechnol.">
        <title>Family-wide chemical profiling and structural analysis of PARP and tankyrase inhibitors.</title>
        <authorList>
            <person name="Wahlberg E."/>
            <person name="Karlberg T."/>
            <person name="Kouznetsova E."/>
            <person name="Markova N."/>
            <person name="Macchiarulo A."/>
            <person name="Thorsell A.G."/>
            <person name="Pol E."/>
            <person name="Frostell A."/>
            <person name="Ekblad T."/>
            <person name="Oncu D."/>
            <person name="Kull B."/>
            <person name="Robertson G.M."/>
            <person name="Pellicciari R."/>
            <person name="Schuler H."/>
            <person name="Weigelt J."/>
        </authorList>
    </citation>
    <scope>X-RAY CRYSTALLOGRAPHY (1.50 ANGSTROMS) OF 1611-1801</scope>
</reference>
<reference evidence="20 21 22 23 24 25" key="17">
    <citation type="journal article" date="2013" name="Structure">
        <title>Recognition of mono-ADP-ribosylated ARTD10 substrates by ARTD8 macrodomains.</title>
        <authorList>
            <person name="Forst A.H."/>
            <person name="Karlberg T."/>
            <person name="Herzog N."/>
            <person name="Thorsell A.G."/>
            <person name="Gross A."/>
            <person name="Feijs K.L."/>
            <person name="Verheugd P."/>
            <person name="Kursula P."/>
            <person name="Nijmeijer B."/>
            <person name="Kremmer E."/>
            <person name="Kleine H."/>
            <person name="Ladurner A.G."/>
            <person name="Schuler H."/>
            <person name="Luscher B."/>
        </authorList>
    </citation>
    <scope>X-RAY CRYSTALLOGRAPHY (1.15 ANGSTROMS) OF 784-1196 AND 1208-1388 IN COMPLEXES WITH ADP AND ADENOSINE-5-DIPHOSPHORIBOSE</scope>
    <scope>INTERACTION WITH PARP10</scope>
    <scope>MUTAGENESIS OF GLY-1055</scope>
</reference>
<name>PAR14_HUMAN</name>
<keyword id="KW-0002">3D-structure</keyword>
<keyword id="KW-0013">ADP-ribosylation</keyword>
<keyword id="KW-0025">Alternative splicing</keyword>
<keyword id="KW-0963">Cytoplasm</keyword>
<keyword id="KW-0328">Glycosyltransferase</keyword>
<keyword id="KW-0391">Immunity</keyword>
<keyword id="KW-0399">Innate immunity</keyword>
<keyword id="KW-0520">NAD</keyword>
<keyword id="KW-0548">Nucleotidyltransferase</keyword>
<keyword id="KW-0539">Nucleus</keyword>
<keyword id="KW-0597">Phosphoprotein</keyword>
<keyword id="KW-1267">Proteomics identification</keyword>
<keyword id="KW-1185">Reference proteome</keyword>
<keyword id="KW-0677">Repeat</keyword>
<keyword id="KW-0804">Transcription</keyword>
<keyword id="KW-0805">Transcription regulation</keyword>
<keyword id="KW-0808">Transferase</keyword>
<accession>Q460N5</accession>
<accession>B4E2H0</accession>
<accession>Q460N4</accession>
<accession>Q8J027</accession>
<accession>Q9H9X9</accession>
<accession>Q9NV60</accession>
<accession>Q9ULF2</accession>
<organism>
    <name type="scientific">Homo sapiens</name>
    <name type="common">Human</name>
    <dbReference type="NCBI Taxonomy" id="9606"/>
    <lineage>
        <taxon>Eukaryota</taxon>
        <taxon>Metazoa</taxon>
        <taxon>Chordata</taxon>
        <taxon>Craniata</taxon>
        <taxon>Vertebrata</taxon>
        <taxon>Euteleostomi</taxon>
        <taxon>Mammalia</taxon>
        <taxon>Eutheria</taxon>
        <taxon>Euarchontoglires</taxon>
        <taxon>Primates</taxon>
        <taxon>Haplorrhini</taxon>
        <taxon>Catarrhini</taxon>
        <taxon>Hominidae</taxon>
        <taxon>Homo</taxon>
    </lineage>
</organism>
<dbReference type="EC" id="2.4.2.-" evidence="6 7 9 10"/>
<dbReference type="EMBL" id="AY134858">
    <property type="protein sequence ID" value="AAN08627.1"/>
    <property type="molecule type" value="mRNA"/>
</dbReference>
<dbReference type="EMBL" id="AC048348">
    <property type="status" value="NOT_ANNOTATED_CDS"/>
    <property type="molecule type" value="Genomic_DNA"/>
</dbReference>
<dbReference type="EMBL" id="AC092908">
    <property type="status" value="NOT_ANNOTATED_CDS"/>
    <property type="molecule type" value="Genomic_DNA"/>
</dbReference>
<dbReference type="EMBL" id="AK001770">
    <property type="protein sequence ID" value="BAA91897.1"/>
    <property type="molecule type" value="mRNA"/>
</dbReference>
<dbReference type="EMBL" id="AK022542">
    <property type="protein sequence ID" value="BAB14089.1"/>
    <property type="status" value="ALT_INIT"/>
    <property type="molecule type" value="mRNA"/>
</dbReference>
<dbReference type="EMBL" id="AK304269">
    <property type="protein sequence ID" value="BAG65132.1"/>
    <property type="molecule type" value="mRNA"/>
</dbReference>
<dbReference type="EMBL" id="DB237115">
    <property type="status" value="NOT_ANNOTATED_CDS"/>
    <property type="molecule type" value="mRNA"/>
</dbReference>
<dbReference type="EMBL" id="DQ063584">
    <property type="protein sequence ID" value="AAY64449.1"/>
    <property type="status" value="ALT_INIT"/>
    <property type="molecule type" value="mRNA"/>
</dbReference>
<dbReference type="EMBL" id="DQ063585">
    <property type="protein sequence ID" value="AAY64450.1"/>
    <property type="status" value="ALT_INIT"/>
    <property type="molecule type" value="mRNA"/>
</dbReference>
<dbReference type="EMBL" id="AB033094">
    <property type="protein sequence ID" value="BAA86582.1"/>
    <property type="molecule type" value="mRNA"/>
</dbReference>
<dbReference type="CCDS" id="CCDS46894.1">
    <molecule id="Q460N5-6"/>
</dbReference>
<dbReference type="RefSeq" id="NP_060024.2">
    <molecule id="Q460N5-6"/>
    <property type="nucleotide sequence ID" value="NM_017554.3"/>
</dbReference>
<dbReference type="PDB" id="3GOY">
    <property type="method" value="X-ray"/>
    <property type="resolution" value="2.80 A"/>
    <property type="chains" value="A/B/C/D=1611-1801"/>
</dbReference>
<dbReference type="PDB" id="3Q6Z">
    <property type="method" value="X-ray"/>
    <property type="resolution" value="2.23 A"/>
    <property type="chains" value="A=789-979"/>
</dbReference>
<dbReference type="PDB" id="3Q71">
    <property type="method" value="X-ray"/>
    <property type="resolution" value="2.20 A"/>
    <property type="chains" value="A=999-1196"/>
</dbReference>
<dbReference type="PDB" id="3SE2">
    <property type="method" value="X-ray"/>
    <property type="resolution" value="2.30 A"/>
    <property type="chains" value="A/B/C/D=1611-1801"/>
</dbReference>
<dbReference type="PDB" id="3SMI">
    <property type="method" value="X-ray"/>
    <property type="resolution" value="2.40 A"/>
    <property type="chains" value="A/B=1611-1801"/>
</dbReference>
<dbReference type="PDB" id="3SMJ">
    <property type="method" value="X-ray"/>
    <property type="resolution" value="1.50 A"/>
    <property type="chains" value="A/B=1611-1801"/>
</dbReference>
<dbReference type="PDB" id="3VFQ">
    <property type="method" value="X-ray"/>
    <property type="resolution" value="2.80 A"/>
    <property type="chains" value="A=784-1196"/>
</dbReference>
<dbReference type="PDB" id="4ABK">
    <property type="method" value="X-ray"/>
    <property type="resolution" value="1.60 A"/>
    <property type="chains" value="A=1208-1388"/>
</dbReference>
<dbReference type="PDB" id="4ABL">
    <property type="method" value="X-ray"/>
    <property type="resolution" value="1.15 A"/>
    <property type="chains" value="A=1208-1388"/>
</dbReference>
<dbReference type="PDB" id="4D86">
    <property type="method" value="X-ray"/>
    <property type="resolution" value="2.00 A"/>
    <property type="chains" value="A=784-1196"/>
</dbReference>
<dbReference type="PDB" id="4F1L">
    <property type="method" value="X-ray"/>
    <property type="resolution" value="1.90 A"/>
    <property type="chains" value="A/B/C/D=1611-1801"/>
</dbReference>
<dbReference type="PDB" id="4F1Q">
    <property type="method" value="X-ray"/>
    <property type="resolution" value="2.80 A"/>
    <property type="chains" value="A/B=1611-1801"/>
</dbReference>
<dbReference type="PDB" id="4PY4">
    <property type="method" value="X-ray"/>
    <property type="resolution" value="2.76 A"/>
    <property type="chains" value="A/B=1613-1801"/>
</dbReference>
<dbReference type="PDB" id="5LXP">
    <property type="method" value="X-ray"/>
    <property type="resolution" value="2.07 A"/>
    <property type="chains" value="A/B=1611-1801"/>
</dbReference>
<dbReference type="PDB" id="5LYH">
    <property type="method" value="X-ray"/>
    <property type="resolution" value="2.17 A"/>
    <property type="chains" value="A/B=1611-1801"/>
</dbReference>
<dbReference type="PDB" id="5NQE">
    <property type="method" value="X-ray"/>
    <property type="resolution" value="2.71 A"/>
    <property type="chains" value="A/B=1611-1801"/>
</dbReference>
<dbReference type="PDB" id="5O2D">
    <property type="method" value="X-ray"/>
    <property type="resolution" value="1.60 A"/>
    <property type="chains" value="A=994-1191"/>
</dbReference>
<dbReference type="PDB" id="5QHT">
    <property type="method" value="X-ray"/>
    <property type="resolution" value="1.05 A"/>
    <property type="chains" value="A=1208-1388"/>
</dbReference>
<dbReference type="PDB" id="5QHU">
    <property type="method" value="X-ray"/>
    <property type="resolution" value="1.05 A"/>
    <property type="chains" value="A=1208-1388"/>
</dbReference>
<dbReference type="PDB" id="5QHV">
    <property type="method" value="X-ray"/>
    <property type="resolution" value="1.05 A"/>
    <property type="chains" value="A=1208-1388"/>
</dbReference>
<dbReference type="PDB" id="5QHW">
    <property type="method" value="X-ray"/>
    <property type="resolution" value="1.12 A"/>
    <property type="chains" value="A=1208-1388"/>
</dbReference>
<dbReference type="PDB" id="5QHX">
    <property type="method" value="X-ray"/>
    <property type="resolution" value="1.11 A"/>
    <property type="chains" value="A=1208-1388"/>
</dbReference>
<dbReference type="PDB" id="5QHY">
    <property type="method" value="X-ray"/>
    <property type="resolution" value="1.17 A"/>
    <property type="chains" value="A=1208-1388"/>
</dbReference>
<dbReference type="PDB" id="5QHZ">
    <property type="method" value="X-ray"/>
    <property type="resolution" value="1.15 A"/>
    <property type="chains" value="A=1208-1388"/>
</dbReference>
<dbReference type="PDB" id="5QI0">
    <property type="method" value="X-ray"/>
    <property type="resolution" value="1.05 A"/>
    <property type="chains" value="A=1208-1388"/>
</dbReference>
<dbReference type="PDB" id="5QI1">
    <property type="method" value="X-ray"/>
    <property type="resolution" value="1.05 A"/>
    <property type="chains" value="A=1208-1388"/>
</dbReference>
<dbReference type="PDB" id="5QI2">
    <property type="method" value="X-ray"/>
    <property type="resolution" value="1.08 A"/>
    <property type="chains" value="A=1208-1388"/>
</dbReference>
<dbReference type="PDB" id="5QI3">
    <property type="method" value="X-ray"/>
    <property type="resolution" value="1.05 A"/>
    <property type="chains" value="A=1208-1388"/>
</dbReference>
<dbReference type="PDB" id="5QI4">
    <property type="method" value="X-ray"/>
    <property type="resolution" value="1.20 A"/>
    <property type="chains" value="A=1208-1388"/>
</dbReference>
<dbReference type="PDB" id="5QI5">
    <property type="method" value="X-ray"/>
    <property type="resolution" value="1.05 A"/>
    <property type="chains" value="A=1208-1388"/>
</dbReference>
<dbReference type="PDB" id="5QI6">
    <property type="method" value="X-ray"/>
    <property type="resolution" value="1.10 A"/>
    <property type="chains" value="A=1208-1388"/>
</dbReference>
<dbReference type="PDB" id="5QI7">
    <property type="method" value="X-ray"/>
    <property type="resolution" value="1.05 A"/>
    <property type="chains" value="A=1208-1388"/>
</dbReference>
<dbReference type="PDB" id="5QI8">
    <property type="method" value="X-ray"/>
    <property type="resolution" value="1.09 A"/>
    <property type="chains" value="A=1208-1388"/>
</dbReference>
<dbReference type="PDB" id="5QI9">
    <property type="method" value="X-ray"/>
    <property type="resolution" value="1.05 A"/>
    <property type="chains" value="A=1208-1388"/>
</dbReference>
<dbReference type="PDB" id="5QIA">
    <property type="method" value="X-ray"/>
    <property type="resolution" value="1.14 A"/>
    <property type="chains" value="A=1208-1388"/>
</dbReference>
<dbReference type="PDB" id="5V7T">
    <property type="method" value="X-ray"/>
    <property type="resolution" value="2.30 A"/>
    <property type="chains" value="A=1610-1801"/>
</dbReference>
<dbReference type="PDB" id="5V7W">
    <property type="method" value="X-ray"/>
    <property type="resolution" value="2.65 A"/>
    <property type="chains" value="A/B=1610-1801"/>
</dbReference>
<dbReference type="PDB" id="6FYM">
    <property type="method" value="X-ray"/>
    <property type="resolution" value="2.15 A"/>
    <property type="chains" value="A/B/C/D=1611-1801"/>
</dbReference>
<dbReference type="PDB" id="6FZM">
    <property type="method" value="X-ray"/>
    <property type="resolution" value="2.67 A"/>
    <property type="chains" value="A/B=1611-1801"/>
</dbReference>
<dbReference type="PDB" id="6G0W">
    <property type="method" value="X-ray"/>
    <property type="resolution" value="2.34 A"/>
    <property type="chains" value="A/B=1611-1801"/>
</dbReference>
<dbReference type="PDB" id="6WE2">
    <property type="method" value="X-ray"/>
    <property type="resolution" value="2.66 A"/>
    <property type="chains" value="A/B=1613-1801"/>
</dbReference>
<dbReference type="PDB" id="6WE3">
    <property type="method" value="X-ray"/>
    <property type="resolution" value="1.95 A"/>
    <property type="chains" value="A/B=1611-1801"/>
</dbReference>
<dbReference type="PDB" id="6WE4">
    <property type="method" value="X-ray"/>
    <property type="resolution" value="1.60 A"/>
    <property type="chains" value="A/B=1611-1801"/>
</dbReference>
<dbReference type="PDB" id="7D2C">
    <property type="method" value="X-ray"/>
    <property type="resolution" value="1.56 A"/>
    <property type="chains" value="A=1206-1387"/>
</dbReference>
<dbReference type="PDB" id="7L9Y">
    <property type="method" value="X-ray"/>
    <property type="resolution" value="2.25 A"/>
    <property type="chains" value="A/B/C/D=1611-1801"/>
</dbReference>
<dbReference type="PDB" id="7LUN">
    <property type="method" value="X-ray"/>
    <property type="resolution" value="2.57 A"/>
    <property type="chains" value="A/B/C/D/E/F/G/H=1611-1801"/>
</dbReference>
<dbReference type="PDB" id="7R3L">
    <property type="method" value="X-ray"/>
    <property type="resolution" value="2.00 A"/>
    <property type="chains" value="A/B=1611-1801"/>
</dbReference>
<dbReference type="PDBsum" id="3GOY"/>
<dbReference type="PDBsum" id="3Q6Z"/>
<dbReference type="PDBsum" id="3Q71"/>
<dbReference type="PDBsum" id="3SE2"/>
<dbReference type="PDBsum" id="3SMI"/>
<dbReference type="PDBsum" id="3SMJ"/>
<dbReference type="PDBsum" id="3VFQ"/>
<dbReference type="PDBsum" id="4ABK"/>
<dbReference type="PDBsum" id="4ABL"/>
<dbReference type="PDBsum" id="4D86"/>
<dbReference type="PDBsum" id="4F1L"/>
<dbReference type="PDBsum" id="4F1Q"/>
<dbReference type="PDBsum" id="4PY4"/>
<dbReference type="PDBsum" id="5LXP"/>
<dbReference type="PDBsum" id="5LYH"/>
<dbReference type="PDBsum" id="5NQE"/>
<dbReference type="PDBsum" id="5O2D"/>
<dbReference type="PDBsum" id="5QHT"/>
<dbReference type="PDBsum" id="5QHU"/>
<dbReference type="PDBsum" id="5QHV"/>
<dbReference type="PDBsum" id="5QHW"/>
<dbReference type="PDBsum" id="5QHX"/>
<dbReference type="PDBsum" id="5QHY"/>
<dbReference type="PDBsum" id="5QHZ"/>
<dbReference type="PDBsum" id="5QI0"/>
<dbReference type="PDBsum" id="5QI1"/>
<dbReference type="PDBsum" id="5QI2"/>
<dbReference type="PDBsum" id="5QI3"/>
<dbReference type="PDBsum" id="5QI4"/>
<dbReference type="PDBsum" id="5QI5"/>
<dbReference type="PDBsum" id="5QI6"/>
<dbReference type="PDBsum" id="5QI7"/>
<dbReference type="PDBsum" id="5QI8"/>
<dbReference type="PDBsum" id="5QI9"/>
<dbReference type="PDBsum" id="5QIA"/>
<dbReference type="PDBsum" id="5V7T"/>
<dbReference type="PDBsum" id="5V7W"/>
<dbReference type="PDBsum" id="6FYM"/>
<dbReference type="PDBsum" id="6FZM"/>
<dbReference type="PDBsum" id="6G0W"/>
<dbReference type="PDBsum" id="6WE2"/>
<dbReference type="PDBsum" id="6WE3"/>
<dbReference type="PDBsum" id="6WE4"/>
<dbReference type="PDBsum" id="7D2C"/>
<dbReference type="PDBsum" id="7L9Y"/>
<dbReference type="PDBsum" id="7LUN"/>
<dbReference type="PDBsum" id="7R3L"/>
<dbReference type="SMR" id="Q460N5"/>
<dbReference type="BioGRID" id="120082">
    <property type="interactions" value="51"/>
</dbReference>
<dbReference type="DIP" id="DIP-61130N"/>
<dbReference type="FunCoup" id="Q460N5">
    <property type="interactions" value="1933"/>
</dbReference>
<dbReference type="IntAct" id="Q460N5">
    <property type="interactions" value="13"/>
</dbReference>
<dbReference type="MINT" id="Q460N5"/>
<dbReference type="STRING" id="9606.ENSP00000418194"/>
<dbReference type="BindingDB" id="Q460N5"/>
<dbReference type="ChEMBL" id="CHEMBL2176777"/>
<dbReference type="DrugCentral" id="Q460N5"/>
<dbReference type="GuidetoPHARMACOLOGY" id="3269"/>
<dbReference type="GlyGen" id="Q460N5">
    <property type="glycosylation" value="2 sites, 1 N-linked glycan (1 site), 1 O-linked glycan (1 site)"/>
</dbReference>
<dbReference type="iPTMnet" id="Q460N5"/>
<dbReference type="PhosphoSitePlus" id="Q460N5"/>
<dbReference type="SwissPalm" id="Q460N5"/>
<dbReference type="BioMuta" id="PARP14"/>
<dbReference type="DMDM" id="327478567"/>
<dbReference type="jPOST" id="Q460N5"/>
<dbReference type="MassIVE" id="Q460N5"/>
<dbReference type="PaxDb" id="9606-ENSP00000418194"/>
<dbReference type="PeptideAtlas" id="Q460N5"/>
<dbReference type="ProteomicsDB" id="61930">
    <molecule id="Q460N5-6"/>
</dbReference>
<dbReference type="ProteomicsDB" id="61931">
    <molecule id="Q460N5-1"/>
</dbReference>
<dbReference type="ProteomicsDB" id="61932">
    <molecule id="Q460N5-3"/>
</dbReference>
<dbReference type="ProteomicsDB" id="61933">
    <molecule id="Q460N5-4"/>
</dbReference>
<dbReference type="ProteomicsDB" id="61934">
    <molecule id="Q460N5-5"/>
</dbReference>
<dbReference type="Pumba" id="Q460N5"/>
<dbReference type="ABCD" id="Q460N5">
    <property type="antibodies" value="1 sequenced antibody"/>
</dbReference>
<dbReference type="Antibodypedia" id="2150">
    <property type="antibodies" value="89 antibodies from 19 providers"/>
</dbReference>
<dbReference type="DNASU" id="54625"/>
<dbReference type="Ensembl" id="ENST00000474629.7">
    <molecule id="Q460N5-6"/>
    <property type="protein sequence ID" value="ENSP00000418194.2"/>
    <property type="gene ID" value="ENSG00000173193.15"/>
</dbReference>
<dbReference type="GeneID" id="54625"/>
<dbReference type="KEGG" id="hsa:54625"/>
<dbReference type="MANE-Select" id="ENST00000474629.7">
    <property type="protein sequence ID" value="ENSP00000418194.2"/>
    <property type="RefSeq nucleotide sequence ID" value="NM_017554.3"/>
    <property type="RefSeq protein sequence ID" value="NP_060024.2"/>
</dbReference>
<dbReference type="UCSC" id="uc003efq.5">
    <molecule id="Q460N5-6"/>
    <property type="organism name" value="human"/>
</dbReference>
<dbReference type="AGR" id="HGNC:29232"/>
<dbReference type="CTD" id="54625"/>
<dbReference type="DisGeNET" id="54625"/>
<dbReference type="GeneCards" id="PARP14"/>
<dbReference type="HGNC" id="HGNC:29232">
    <property type="gene designation" value="PARP14"/>
</dbReference>
<dbReference type="HPA" id="ENSG00000173193">
    <property type="expression patterns" value="Low tissue specificity"/>
</dbReference>
<dbReference type="MIM" id="610028">
    <property type="type" value="gene"/>
</dbReference>
<dbReference type="neXtProt" id="NX_Q460N5"/>
<dbReference type="OpenTargets" id="ENSG00000173193"/>
<dbReference type="PharmGKB" id="PA134861585"/>
<dbReference type="VEuPathDB" id="HostDB:ENSG00000173193"/>
<dbReference type="eggNOG" id="KOG2633">
    <property type="taxonomic scope" value="Eukaryota"/>
</dbReference>
<dbReference type="GeneTree" id="ENSGT00940000154311"/>
<dbReference type="HOGENOM" id="CLU_003288_1_0_1"/>
<dbReference type="InParanoid" id="Q460N5"/>
<dbReference type="OMA" id="KCFSRTA"/>
<dbReference type="OrthoDB" id="6133115at2759"/>
<dbReference type="PAN-GO" id="Q460N5">
    <property type="GO annotations" value="8 GO annotations based on evolutionary models"/>
</dbReference>
<dbReference type="PhylomeDB" id="Q460N5"/>
<dbReference type="TreeFam" id="TF328965"/>
<dbReference type="BRENDA" id="2.4.2.30">
    <property type="organism ID" value="2681"/>
</dbReference>
<dbReference type="PathwayCommons" id="Q460N5"/>
<dbReference type="Reactome" id="R-HSA-197264">
    <property type="pathway name" value="Nicotinamide salvaging"/>
</dbReference>
<dbReference type="Reactome" id="R-HSA-9683610">
    <property type="pathway name" value="Maturation of nucleoprotein"/>
</dbReference>
<dbReference type="Reactome" id="R-HSA-9694631">
    <property type="pathway name" value="Maturation of nucleoprotein"/>
</dbReference>
<dbReference type="SignaLink" id="Q460N5"/>
<dbReference type="BioGRID-ORCS" id="54625">
    <property type="hits" value="17 hits in 1164 CRISPR screens"/>
</dbReference>
<dbReference type="ChiTaRS" id="PARP14">
    <property type="organism name" value="human"/>
</dbReference>
<dbReference type="EvolutionaryTrace" id="Q460N5"/>
<dbReference type="GenomeRNAi" id="54625"/>
<dbReference type="Pharos" id="Q460N5">
    <property type="development level" value="Tchem"/>
</dbReference>
<dbReference type="PRO" id="PR:Q460N5"/>
<dbReference type="Proteomes" id="UP000005640">
    <property type="component" value="Chromosome 3"/>
</dbReference>
<dbReference type="RNAct" id="Q460N5">
    <property type="molecule type" value="protein"/>
</dbReference>
<dbReference type="Bgee" id="ENSG00000173193">
    <property type="expression patterns" value="Expressed in sural nerve and 178 other cell types or tissues"/>
</dbReference>
<dbReference type="ExpressionAtlas" id="Q460N5">
    <property type="expression patterns" value="baseline and differential"/>
</dbReference>
<dbReference type="GO" id="GO:0005737">
    <property type="term" value="C:cytoplasm"/>
    <property type="evidence" value="ECO:0000314"/>
    <property type="project" value="UniProtKB"/>
</dbReference>
<dbReference type="GO" id="GO:0005829">
    <property type="term" value="C:cytosol"/>
    <property type="evidence" value="ECO:0000314"/>
    <property type="project" value="HPA"/>
</dbReference>
<dbReference type="GO" id="GO:0016020">
    <property type="term" value="C:membrane"/>
    <property type="evidence" value="ECO:0007005"/>
    <property type="project" value="UniProtKB"/>
</dbReference>
<dbReference type="GO" id="GO:0005634">
    <property type="term" value="C:nucleus"/>
    <property type="evidence" value="ECO:0000318"/>
    <property type="project" value="GO_Central"/>
</dbReference>
<dbReference type="GO" id="GO:0005886">
    <property type="term" value="C:plasma membrane"/>
    <property type="evidence" value="ECO:0000314"/>
    <property type="project" value="HPA"/>
</dbReference>
<dbReference type="GO" id="GO:0019899">
    <property type="term" value="F:enzyme binding"/>
    <property type="evidence" value="ECO:0000353"/>
    <property type="project" value="UniProtKB"/>
</dbReference>
<dbReference type="GO" id="GO:0070403">
    <property type="term" value="F:NAD+ binding"/>
    <property type="evidence" value="ECO:0000315"/>
    <property type="project" value="UniProtKB"/>
</dbReference>
<dbReference type="GO" id="GO:0003950">
    <property type="term" value="F:NAD+ poly-ADP-ribosyltransferase activity"/>
    <property type="evidence" value="ECO:0000314"/>
    <property type="project" value="UniProtKB"/>
</dbReference>
<dbReference type="GO" id="GO:1990404">
    <property type="term" value="F:NAD+-protein mono-ADP-ribosyltransferase activity"/>
    <property type="evidence" value="ECO:0000314"/>
    <property type="project" value="UniProtKB"/>
</dbReference>
<dbReference type="GO" id="GO:0140807">
    <property type="term" value="F:NAD+-protein-glutamate ADP-ribosyltransferase activity"/>
    <property type="evidence" value="ECO:0007669"/>
    <property type="project" value="RHEA"/>
</dbReference>
<dbReference type="GO" id="GO:0016779">
    <property type="term" value="F:nucleotidyltransferase activity"/>
    <property type="evidence" value="ECO:0007669"/>
    <property type="project" value="UniProtKB-KW"/>
</dbReference>
<dbReference type="GO" id="GO:0003714">
    <property type="term" value="F:transcription corepressor activity"/>
    <property type="evidence" value="ECO:0000318"/>
    <property type="project" value="GO_Central"/>
</dbReference>
<dbReference type="GO" id="GO:0045087">
    <property type="term" value="P:innate immune response"/>
    <property type="evidence" value="ECO:0007669"/>
    <property type="project" value="UniProtKB-KW"/>
</dbReference>
<dbReference type="GO" id="GO:0010629">
    <property type="term" value="P:negative regulation of gene expression"/>
    <property type="evidence" value="ECO:0000315"/>
    <property type="project" value="UniProtKB"/>
</dbReference>
<dbReference type="GO" id="GO:0060336">
    <property type="term" value="P:negative regulation of type II interferon-mediated signaling pathway"/>
    <property type="evidence" value="ECO:0000315"/>
    <property type="project" value="UniProtKB"/>
</dbReference>
<dbReference type="GO" id="GO:0042532">
    <property type="term" value="P:negative regulation of tyrosine phosphorylation of STAT protein"/>
    <property type="evidence" value="ECO:0000315"/>
    <property type="project" value="UniProtKB"/>
</dbReference>
<dbReference type="GO" id="GO:1902216">
    <property type="term" value="P:positive regulation of interleukin-4-mediated signaling pathway"/>
    <property type="evidence" value="ECO:0000315"/>
    <property type="project" value="UniProtKB"/>
</dbReference>
<dbReference type="GO" id="GO:0042531">
    <property type="term" value="P:positive regulation of tyrosine phosphorylation of STAT protein"/>
    <property type="evidence" value="ECO:0000315"/>
    <property type="project" value="UniProtKB"/>
</dbReference>
<dbReference type="GO" id="GO:0070212">
    <property type="term" value="P:protein poly-ADP-ribosylation"/>
    <property type="evidence" value="ECO:0000315"/>
    <property type="project" value="UniProtKB"/>
</dbReference>
<dbReference type="CDD" id="cd02907">
    <property type="entry name" value="Macro_Af1521_BAL-like"/>
    <property type="match status" value="1"/>
</dbReference>
<dbReference type="CDD" id="cd02903">
    <property type="entry name" value="Macro_BAL-like"/>
    <property type="match status" value="2"/>
</dbReference>
<dbReference type="CDD" id="cd12300">
    <property type="entry name" value="RRM1_PAR14"/>
    <property type="match status" value="1"/>
</dbReference>
<dbReference type="CDD" id="cd12543">
    <property type="entry name" value="RRM2_PAR14"/>
    <property type="match status" value="1"/>
</dbReference>
<dbReference type="CDD" id="cd01439">
    <property type="entry name" value="TCCD_inducible_PARP_like"/>
    <property type="match status" value="1"/>
</dbReference>
<dbReference type="FunFam" id="3.30.70.330:FF:000487">
    <property type="entry name" value="Poly [ADP-ribose] polymerase"/>
    <property type="match status" value="1"/>
</dbReference>
<dbReference type="FunFam" id="3.30.70.330:FF:000546">
    <property type="entry name" value="Poly [ADP-ribose] polymerase"/>
    <property type="match status" value="1"/>
</dbReference>
<dbReference type="FunFam" id="3.30.720.50:FF:000012">
    <property type="entry name" value="Poly [ADP-ribose] polymerase"/>
    <property type="match status" value="1"/>
</dbReference>
<dbReference type="FunFam" id="3.40.220.10:FF:000009">
    <property type="entry name" value="Poly [ADP-ribose] polymerase"/>
    <property type="match status" value="1"/>
</dbReference>
<dbReference type="FunFam" id="3.40.220.10:FF:000010">
    <property type="entry name" value="Poly [ADP-ribose] polymerase"/>
    <property type="match status" value="1"/>
</dbReference>
<dbReference type="FunFam" id="3.40.220.10:FF:000013">
    <property type="entry name" value="Poly [ADP-ribose] polymerase"/>
    <property type="match status" value="1"/>
</dbReference>
<dbReference type="FunFam" id="3.90.228.10:FF:000008">
    <property type="entry name" value="Poly [ADP-ribose] polymerase"/>
    <property type="match status" value="1"/>
</dbReference>
<dbReference type="Gene3D" id="3.30.70.330">
    <property type="match status" value="2"/>
</dbReference>
<dbReference type="Gene3D" id="3.30.720.50">
    <property type="match status" value="1"/>
</dbReference>
<dbReference type="Gene3D" id="3.90.228.10">
    <property type="match status" value="1"/>
</dbReference>
<dbReference type="Gene3D" id="3.40.220.10">
    <property type="entry name" value="Leucine Aminopeptidase, subunit E, domain 1"/>
    <property type="match status" value="3"/>
</dbReference>
<dbReference type="InterPro" id="IPR002589">
    <property type="entry name" value="Macro_dom"/>
</dbReference>
<dbReference type="InterPro" id="IPR043472">
    <property type="entry name" value="Macro_dom-like"/>
</dbReference>
<dbReference type="InterPro" id="IPR052056">
    <property type="entry name" value="Mono-ARTD/PARP"/>
</dbReference>
<dbReference type="InterPro" id="IPR012677">
    <property type="entry name" value="Nucleotide-bd_a/b_plait_sf"/>
</dbReference>
<dbReference type="InterPro" id="IPR034517">
    <property type="entry name" value="PAR14_RRM2"/>
</dbReference>
<dbReference type="InterPro" id="IPR057044">
    <property type="entry name" value="PARP14_KH_1"/>
</dbReference>
<dbReference type="InterPro" id="IPR057043">
    <property type="entry name" value="PARP14_KH_2"/>
</dbReference>
<dbReference type="InterPro" id="IPR057045">
    <property type="entry name" value="PARP14_KH_3"/>
</dbReference>
<dbReference type="InterPro" id="IPR057046">
    <property type="entry name" value="PARP14_KH_4"/>
</dbReference>
<dbReference type="InterPro" id="IPR057047">
    <property type="entry name" value="PARP14_KH_5"/>
</dbReference>
<dbReference type="InterPro" id="IPR057048">
    <property type="entry name" value="PARP14_KH_6"/>
</dbReference>
<dbReference type="InterPro" id="IPR057049">
    <property type="entry name" value="PARP14_KH_8"/>
</dbReference>
<dbReference type="InterPro" id="IPR057051">
    <property type="entry name" value="PARP14_RPM_1"/>
</dbReference>
<dbReference type="InterPro" id="IPR054596">
    <property type="entry name" value="PARP14_WWE"/>
</dbReference>
<dbReference type="InterPro" id="IPR012317">
    <property type="entry name" value="Poly(ADP-ribose)pol_cat_dom"/>
</dbReference>
<dbReference type="InterPro" id="IPR057050">
    <property type="entry name" value="RRM_PARP14_2"/>
</dbReference>
<dbReference type="InterPro" id="IPR004170">
    <property type="entry name" value="WWE_dom"/>
</dbReference>
<dbReference type="InterPro" id="IPR037197">
    <property type="entry name" value="WWE_dom_sf"/>
</dbReference>
<dbReference type="PANTHER" id="PTHR14453">
    <property type="entry name" value="PARP/ZINC FINGER CCCH TYPE DOMAIN CONTAINING PROTEIN"/>
    <property type="match status" value="1"/>
</dbReference>
<dbReference type="PANTHER" id="PTHR14453:SF89">
    <property type="entry name" value="PROTEIN MONO-ADP-RIBOSYLTRANSFERASE PARP14"/>
    <property type="match status" value="1"/>
</dbReference>
<dbReference type="Pfam" id="PF23084">
    <property type="entry name" value="KH_PARP14_1"/>
    <property type="match status" value="1"/>
</dbReference>
<dbReference type="Pfam" id="PF23248">
    <property type="entry name" value="KH_PARP14_2"/>
    <property type="match status" value="1"/>
</dbReference>
<dbReference type="Pfam" id="PF23249">
    <property type="entry name" value="KH_PARP14_3"/>
    <property type="match status" value="1"/>
</dbReference>
<dbReference type="Pfam" id="PF23251">
    <property type="entry name" value="KH_PARP14_4"/>
    <property type="match status" value="1"/>
</dbReference>
<dbReference type="Pfam" id="PF23252">
    <property type="entry name" value="KH_PARP14_5"/>
    <property type="match status" value="1"/>
</dbReference>
<dbReference type="Pfam" id="PF23253">
    <property type="entry name" value="KH_PARP14_6"/>
    <property type="match status" value="1"/>
</dbReference>
<dbReference type="Pfam" id="PF23254">
    <property type="entry name" value="KH_PARP14_8"/>
    <property type="match status" value="1"/>
</dbReference>
<dbReference type="Pfam" id="PF01661">
    <property type="entry name" value="Macro"/>
    <property type="match status" value="3"/>
</dbReference>
<dbReference type="Pfam" id="PF00644">
    <property type="entry name" value="PARP"/>
    <property type="match status" value="1"/>
</dbReference>
<dbReference type="Pfam" id="PF23222">
    <property type="entry name" value="RRM_PARP14_1"/>
    <property type="match status" value="1"/>
</dbReference>
<dbReference type="Pfam" id="PF23245">
    <property type="entry name" value="RRM_PARP14_2"/>
    <property type="match status" value="1"/>
</dbReference>
<dbReference type="Pfam" id="PF23085">
    <property type="entry name" value="RRM_PARP14_3"/>
    <property type="match status" value="1"/>
</dbReference>
<dbReference type="Pfam" id="PF22005">
    <property type="entry name" value="WWE_1"/>
    <property type="match status" value="1"/>
</dbReference>
<dbReference type="SMART" id="SM00506">
    <property type="entry name" value="A1pp"/>
    <property type="match status" value="3"/>
</dbReference>
<dbReference type="SUPFAM" id="SSF56399">
    <property type="entry name" value="ADP-ribosylation"/>
    <property type="match status" value="1"/>
</dbReference>
<dbReference type="SUPFAM" id="SSF52949">
    <property type="entry name" value="Macro domain-like"/>
    <property type="match status" value="3"/>
</dbReference>
<dbReference type="SUPFAM" id="SSF117839">
    <property type="entry name" value="WWE domain"/>
    <property type="match status" value="1"/>
</dbReference>
<dbReference type="PROSITE" id="PS51154">
    <property type="entry name" value="MACRO"/>
    <property type="match status" value="3"/>
</dbReference>
<dbReference type="PROSITE" id="PS51059">
    <property type="entry name" value="PARP_CATALYTIC"/>
    <property type="match status" value="1"/>
</dbReference>
<dbReference type="PROSITE" id="PS50918">
    <property type="entry name" value="WWE"/>
    <property type="match status" value="1"/>
</dbReference>
<sequence length="1801" mass="202800">MAVPGSFPLLVEGSWGPDPPKNLNTKLQMYFQSPKRSGGGECEVRQDPRSPSRFLVFFYPEDVRQKVLERKNHELVWQGKGTFKLTVQLPATPDEIDHVFEEELLTKESKTKEDVKEPDVSEELDTKLPLDGGLDKMEDIPEECENISSLVAFENLKANVTDIMLILLVENISGLSNDDFQVEIIRDFDVAVVTFQKHIDTIRFVDDCTKHHSIKQLQLSPRLLEVTNTIRVENLPPGADDYSLKLFFENPYNGGGRVANVEYFPEESSALIEFFDRKVLDTIMATKLDFNKMPLSVFPYYASLGTALYGKEKPLIKLPAPFEESLDLPLWKFLQKKNHLIEEINDEMRRCHCELTWSQLSGKVTIRPAATLVNEGRPRIKTWQADTSTTLSSIRSKYKVNPIKVDPTMWDTIKNDVKDDRILIEFDTLKEMVILAGKSEDVQSIEVQVRELIESTTQKIKREEQSLKEKMIISPGRYFLLCHSSLLDHLLTECPEIEICYDRVTQHLCLKGPSADVYKAKCEIQEKVYTMAQKNIQVSPEIFQFLQQVNWKEFSKCLFIAQKILALYELEGTTVLLTSCSSEALLEAEKQMLSALNYKRIEVENKEVLHGKKWKGLTHNLLKKQNSSPNTVIINELTSETTAEVIITGCVKEVNETYKLLFNFVEQNMKIERLVEVKPSLVIDYLKTEKKLFWPKIKKVNVQVSFNPENKQKGILLTGSKTEVLKAVDIVKQVWDSVCVKSVHTDKPGAKQFFQDKARFYQSEIKRLFGCYIELQENEVMKEGGSPAGQKCFSRTVLAPGVVLIVQQGDLARLPVDVVVNASNEDLKHYGGLAAALSKAAGPELQADCDQIVKREGRLLPGNATISKAGKLPYHHVIHAVGPRWSGYEAPRCVYLLRRAVQLSLCLAEKYKYRSIAIPAISSGVFGFPLGRCVETIVSAIKENFQFKKDGHCLKEIYLVDVSEKTVEAFAEAVKTVFKATLPDTAAPPGLPPAAAGPGKTSWEKGSLVSPGGLQMLLVKEGVQNAKTDVVVNSVPLDLVLSRGPLSKSLLEKAGPELQEELDTVGQGVAVSMGTVLKTSSWNLDCRYVLHVVAPEWRNGSTSSLKIMEDIIRECMEITESLSLKSIAFPAIGTGNLGFPKNIFAELIISEVFKFSSKNQLKTLQEVHFLLHPSDHENIQAFSDEFARRANGNLVSDKIPKAKDTQGFYGTVSSPDSGVYEMKIGSIIFQVASGDITKEEADVIVNSTSNSFNLKAGVSKAILECAGQNVERECSQQAQQRKNDYIITGGGFLRCKNIIHVIGGNDVKSSVSSVLQECEKKNYSSICLPAIGTGNAKQHPDKVAEAIIDAIEDFVQKGSAQSVKKVKVVIFLPQVLDVFYANMKKREGTQLSSQQSVMSKLASFLGFSKQSPQKKNHLVLEKKTESATFRVCGENVTCVEYAISWLQDLIEKEQCPYTSEDECIKDFDEKEYQELNELQKKLNINISLDHKRPLIKVLGISRDVMQARDEIEAMIKRVRLAKEQESRADCISEFIEWQYNDNNTSHCFNKMTNLKLEDARREKKKTVDVKINHRHYTVNLNTYTATDTKGHSLSVQRLTKSKVDIPAHWSDMKQQNFCVVELLPSDPEYNTVASKFNQTCSHFRIEKIERIQNPDLWNSYQAKKKTMDAKNGQTMNEKQLFHGTDAGSVPHVNRNGFNRSYAGKNAVAYGKGTYFAVNANYSANDTYSRPDANGRKHVYYVRVLTGIYTHGNHSLIVPPSKNPQNPTDLYDTVTDNVHHPSLFVAFYDYQAYPEYLITFRK</sequence>
<comment type="function">
    <text evidence="6 7 9 10 18">ADP-ribosyltransferase that mediates mono-ADP-ribosylation of glutamate residues on target proteins (PubMed:16061477, PubMed:18851833, PubMed:25043379, PubMed:27796300). In contrast to PARP1 and PARP2, it is not able to mediate poly-ADP-ribosylation (PubMed:25043379). Has been shown to catalyze the mono-ADP-ribosylation of STAT1 at 'Glu-657' and 'Glu-705', thus decreasing STAT1 phosphorylation which negatively regulates pro-inflammatory cytokine production in macrophages in response to IFNG stimulation (PubMed:27796300). However, the role of ADP-ribosylation in the prevention of STAT1 phosphorylation has been called into question and it has been suggested that the inhibition of phosphorylation may be the result of sumoylation of STAT1 'Lys-703' (PubMed:29858569). Mono-ADP-ribosylates STAT6; enhancing STAT6-dependent transcription (PubMed:27796300). In macrophages, positively regulates MRC1 expression in response to IL4 stimulation by promoting STAT6 phosphorylation (PubMed:27796300). Mono-ADP-ribosylates PARP9 (PubMed:27796300).</text>
</comment>
<comment type="catalytic activity">
    <reaction evidence="10">
        <text>L-glutamyl-[protein] + NAD(+) = 5-O-(ADP-D-ribosyl)-L-glutamyl-[protein] + nicotinamide</text>
        <dbReference type="Rhea" id="RHEA:58224"/>
        <dbReference type="Rhea" id="RHEA-COMP:10208"/>
        <dbReference type="Rhea" id="RHEA-COMP:15089"/>
        <dbReference type="ChEBI" id="CHEBI:17154"/>
        <dbReference type="ChEBI" id="CHEBI:29973"/>
        <dbReference type="ChEBI" id="CHEBI:57540"/>
        <dbReference type="ChEBI" id="CHEBI:142540"/>
    </reaction>
    <physiologicalReaction direction="left-to-right" evidence="10">
        <dbReference type="Rhea" id="RHEA:58225"/>
    </physiologicalReaction>
</comment>
<comment type="subunit">
    <text evidence="1 8 10">Interacts with STAT6 (By similarity). Interacts with PARP10 (PubMed:23473667). Interacts with PARP9 in IFNG-stimulated macrophages; the interaction prevents PARP14-mediated STAT1 and STAT6 ADP-riboslylation (PubMed:27796300).</text>
</comment>
<comment type="subcellular location">
    <subcellularLocation>
        <location evidence="1">Nucleus</location>
    </subcellularLocation>
    <subcellularLocation>
        <location evidence="10">Cytoplasm</location>
    </subcellularLocation>
    <text evidence="1 10">In steady state splenocytes the protein is mostly nuclear (By similarity). A minor proportion is detected in the cytoplasm (By similarity). In macrophages, mainly localizes to the cytoplasm (PubMed:27796300).</text>
</comment>
<comment type="alternative products">
    <event type="alternative splicing"/>
    <isoform>
        <id>Q460N5-6</id>
        <name>6</name>
        <sequence type="displayed"/>
    </isoform>
    <isoform>
        <id>Q460N5-1</id>
        <name>1</name>
        <name>BAL2B</name>
        <sequence type="described" ref="VSP_040876"/>
    </isoform>
    <isoform>
        <id>Q460N5-3</id>
        <name>3</name>
        <name>BAL2A</name>
        <sequence type="described" ref="VSP_020014"/>
    </isoform>
    <isoform>
        <id>Q460N5-4</id>
        <name>4</name>
        <sequence type="described" ref="VSP_020018 VSP_020019"/>
    </isoform>
    <isoform>
        <id>Q460N5-5</id>
        <name>5</name>
        <sequence type="described" ref="VSP_020013 VSP_020017"/>
    </isoform>
</comment>
<comment type="tissue specificity">
    <text evidence="10">Expressed in macrophages.</text>
</comment>
<comment type="induction">
    <text evidence="10">Up-regulated by IFNG in macrophages. Down-regulated by IL4 in macrophages.</text>
</comment>
<comment type="PTM">
    <text evidence="6 10">Auto-ADP-ribosylated.</text>
</comment>
<comment type="similarity">
    <text evidence="17">Belongs to the ARTD/PARP family.</text>
</comment>
<comment type="caution">
    <text evidence="18">The role of PARP14-mediated ADP-ribosylation of STAT1 in the prevention of STAT1 phosphorylation has been called into question and it has been suggested that the inhibition of phosphorylation may be the result of sumoylation of STAT1 'Lys-703'.</text>
</comment>
<comment type="sequence caution" evidence="17">
    <conflict type="erroneous initiation">
        <sequence resource="EMBL-CDS" id="AAY64449"/>
    </conflict>
    <text>Truncated N-terminus.</text>
</comment>
<comment type="sequence caution" evidence="17">
    <conflict type="erroneous initiation">
        <sequence resource="EMBL-CDS" id="AAY64450"/>
    </conflict>
    <text>Truncated N-terminus.</text>
</comment>
<comment type="sequence caution" evidence="17">
    <conflict type="erroneous initiation">
        <sequence resource="EMBL-CDS" id="BAB14089"/>
    </conflict>
    <text>Truncated N-terminus.</text>
</comment>
<comment type="sequence caution" evidence="17">
    <conflict type="frameshift">
        <sequence resource="EMBL" id="DB237115"/>
    </conflict>
</comment>
<proteinExistence type="evidence at protein level"/>
<protein>
    <recommendedName>
        <fullName evidence="17">Protein mono-ADP-ribosyltransferase PARP14</fullName>
        <ecNumber evidence="6 7 9 10">2.4.2.-</ecNumber>
    </recommendedName>
    <alternativeName>
        <fullName evidence="15">ADP-ribosyltransferase diphtheria toxin-like 8</fullName>
        <shortName evidence="15">ARTD8</shortName>
    </alternativeName>
    <alternativeName>
        <fullName evidence="13">B aggressive lymphoma protein 2</fullName>
    </alternativeName>
    <alternativeName>
        <fullName evidence="15">Poly [ADP-ribose] polymerase 14</fullName>
        <shortName evidence="15">PARP-14</shortName>
    </alternativeName>
</protein>